<gene>
    <name evidence="1" type="primary">trpD</name>
</gene>
<sequence length="329" mass="34275">MDAVKKAILGEVLEEEEAYEVMRALMAGEVSPVRAAGLLVALSLRGERPHEIAAMARAMREAARPLRVHRRPLLDIVGTGGDGKGLMNLSTLAALVAAAGGVAVAKHGNRAASSRAGSADLLEALGVDLEAPPERVGEAIEELGFGFLFARVFHPAMRHVAPVRAELGVRTVFNLLGPLTNPAGADAYVLGVFSPEWLAPMAEALERLGARGLVVHGEGADELVLGENRVVEVGKGAYALTPEEVGLKRAPLEALKGGGPEENAALARRLLKGEEKGPLADAVALAAGAGFYAAGKTPSLKEGVALAREVLASGEAYLLLERYVAFLRA</sequence>
<protein>
    <recommendedName>
        <fullName evidence="1">Anthranilate phosphoribosyltransferase</fullName>
        <ecNumber evidence="1">2.4.2.18</ecNumber>
    </recommendedName>
</protein>
<accession>P83827</accession>
<evidence type="ECO:0000255" key="1">
    <source>
        <dbReference type="HAMAP-Rule" id="MF_00211"/>
    </source>
</evidence>
<evidence type="ECO:0000269" key="2">
    <source ref="1"/>
</evidence>
<evidence type="ECO:0007829" key="3">
    <source>
        <dbReference type="PDB" id="1V8G"/>
    </source>
</evidence>
<feature type="chain" id="PRO_0000154496" description="Anthranilate phosphoribosyltransferase">
    <location>
        <begin position="1"/>
        <end position="329"/>
    </location>
</feature>
<feature type="binding site" evidence="1">
    <location>
        <position position="78"/>
    </location>
    <ligand>
        <name>5-phospho-alpha-D-ribose 1-diphosphate</name>
        <dbReference type="ChEBI" id="CHEBI:58017"/>
    </ligand>
</feature>
<feature type="binding site" evidence="1">
    <location>
        <position position="78"/>
    </location>
    <ligand>
        <name>anthranilate</name>
        <dbReference type="ChEBI" id="CHEBI:16567"/>
        <label>1</label>
    </ligand>
</feature>
<feature type="binding site" evidence="1">
    <location>
        <begin position="81"/>
        <end position="82"/>
    </location>
    <ligand>
        <name>5-phospho-alpha-D-ribose 1-diphosphate</name>
        <dbReference type="ChEBI" id="CHEBI:58017"/>
    </ligand>
</feature>
<feature type="binding site" evidence="1">
    <location>
        <begin position="88"/>
        <end position="91"/>
    </location>
    <ligand>
        <name>5-phospho-alpha-D-ribose 1-diphosphate</name>
        <dbReference type="ChEBI" id="CHEBI:58017"/>
    </ligand>
</feature>
<feature type="binding site" evidence="1">
    <location>
        <position position="90"/>
    </location>
    <ligand>
        <name>Mg(2+)</name>
        <dbReference type="ChEBI" id="CHEBI:18420"/>
        <label>1</label>
    </ligand>
</feature>
<feature type="binding site" evidence="1">
    <location>
        <begin position="106"/>
        <end position="114"/>
    </location>
    <ligand>
        <name>5-phospho-alpha-D-ribose 1-diphosphate</name>
        <dbReference type="ChEBI" id="CHEBI:58017"/>
    </ligand>
</feature>
<feature type="binding site" evidence="1">
    <location>
        <position position="109"/>
    </location>
    <ligand>
        <name>anthranilate</name>
        <dbReference type="ChEBI" id="CHEBI:16567"/>
        <label>1</label>
    </ligand>
</feature>
<feature type="binding site" evidence="1">
    <location>
        <position position="118"/>
    </location>
    <ligand>
        <name>5-phospho-alpha-D-ribose 1-diphosphate</name>
        <dbReference type="ChEBI" id="CHEBI:58017"/>
    </ligand>
</feature>
<feature type="binding site" evidence="1">
    <location>
        <position position="164"/>
    </location>
    <ligand>
        <name>anthranilate</name>
        <dbReference type="ChEBI" id="CHEBI:16567"/>
        <label>2</label>
    </ligand>
</feature>
<feature type="binding site" evidence="1">
    <location>
        <position position="221"/>
    </location>
    <ligand>
        <name>Mg(2+)</name>
        <dbReference type="ChEBI" id="CHEBI:18420"/>
        <label>2</label>
    </ligand>
</feature>
<feature type="binding site" evidence="1">
    <location>
        <position position="222"/>
    </location>
    <ligand>
        <name>Mg(2+)</name>
        <dbReference type="ChEBI" id="CHEBI:18420"/>
        <label>1</label>
    </ligand>
</feature>
<feature type="binding site" evidence="1">
    <location>
        <position position="222"/>
    </location>
    <ligand>
        <name>Mg(2+)</name>
        <dbReference type="ChEBI" id="CHEBI:18420"/>
        <label>2</label>
    </ligand>
</feature>
<feature type="helix" evidence="3">
    <location>
        <begin position="3"/>
        <end position="8"/>
    </location>
</feature>
<feature type="helix" evidence="3">
    <location>
        <begin position="15"/>
        <end position="26"/>
    </location>
</feature>
<feature type="helix" evidence="3">
    <location>
        <begin position="32"/>
        <end position="45"/>
    </location>
</feature>
<feature type="helix" evidence="3">
    <location>
        <begin position="49"/>
        <end position="61"/>
    </location>
</feature>
<feature type="strand" evidence="3">
    <location>
        <begin position="71"/>
        <end position="78"/>
    </location>
</feature>
<feature type="helix" evidence="3">
    <location>
        <begin position="89"/>
        <end position="99"/>
    </location>
</feature>
<feature type="strand" evidence="3">
    <location>
        <begin position="103"/>
        <end position="108"/>
    </location>
</feature>
<feature type="strand" evidence="3">
    <location>
        <begin position="112"/>
        <end position="115"/>
    </location>
</feature>
<feature type="helix" evidence="3">
    <location>
        <begin position="118"/>
        <end position="124"/>
    </location>
</feature>
<feature type="helix" evidence="3">
    <location>
        <begin position="133"/>
        <end position="143"/>
    </location>
</feature>
<feature type="strand" evidence="3">
    <location>
        <begin position="144"/>
        <end position="149"/>
    </location>
</feature>
<feature type="helix" evidence="3">
    <location>
        <begin position="150"/>
        <end position="153"/>
    </location>
</feature>
<feature type="helix" evidence="3">
    <location>
        <begin position="155"/>
        <end position="159"/>
    </location>
</feature>
<feature type="helix" evidence="3">
    <location>
        <begin position="161"/>
        <end position="167"/>
    </location>
</feature>
<feature type="helix" evidence="3">
    <location>
        <begin position="172"/>
        <end position="176"/>
    </location>
</feature>
<feature type="helix" evidence="3">
    <location>
        <begin position="177"/>
        <end position="179"/>
    </location>
</feature>
<feature type="strand" evidence="3">
    <location>
        <begin position="187"/>
        <end position="191"/>
    </location>
</feature>
<feature type="helix" evidence="3">
    <location>
        <begin position="195"/>
        <end position="197"/>
    </location>
</feature>
<feature type="helix" evidence="3">
    <location>
        <begin position="198"/>
        <end position="207"/>
    </location>
</feature>
<feature type="strand" evidence="3">
    <location>
        <begin position="211"/>
        <end position="217"/>
    </location>
</feature>
<feature type="strand" evidence="3">
    <location>
        <begin position="220"/>
        <end position="222"/>
    </location>
</feature>
<feature type="strand" evidence="3">
    <location>
        <begin position="228"/>
        <end position="232"/>
    </location>
</feature>
<feature type="turn" evidence="3">
    <location>
        <begin position="233"/>
        <end position="235"/>
    </location>
</feature>
<feature type="strand" evidence="3">
    <location>
        <begin position="236"/>
        <end position="240"/>
    </location>
</feature>
<feature type="helix" evidence="3">
    <location>
        <begin position="243"/>
        <end position="245"/>
    </location>
</feature>
<feature type="helix" evidence="3">
    <location>
        <begin position="252"/>
        <end position="255"/>
    </location>
</feature>
<feature type="helix" evidence="3">
    <location>
        <begin position="260"/>
        <end position="271"/>
    </location>
</feature>
<feature type="helix" evidence="3">
    <location>
        <begin position="278"/>
        <end position="293"/>
    </location>
</feature>
<feature type="strand" evidence="3">
    <location>
        <begin position="296"/>
        <end position="299"/>
    </location>
</feature>
<feature type="helix" evidence="3">
    <location>
        <begin position="300"/>
        <end position="312"/>
    </location>
</feature>
<feature type="helix" evidence="3">
    <location>
        <begin position="315"/>
        <end position="328"/>
    </location>
</feature>
<name>TRPD_THETH</name>
<proteinExistence type="evidence at protein level"/>
<keyword id="KW-0002">3D-structure</keyword>
<keyword id="KW-0028">Amino-acid biosynthesis</keyword>
<keyword id="KW-0057">Aromatic amino acid biosynthesis</keyword>
<keyword id="KW-0328">Glycosyltransferase</keyword>
<keyword id="KW-0460">Magnesium</keyword>
<keyword id="KW-0479">Metal-binding</keyword>
<keyword id="KW-0808">Transferase</keyword>
<keyword id="KW-0822">Tryptophan biosynthesis</keyword>
<reference key="1">
    <citation type="submission" date="2004-01" db="PDB data bank">
        <title>Crystal structure of anthranilate phosphoribosyltransferase (TRPD) from Thermus thermophilus HB8.</title>
        <authorList>
            <consortium name="RIKEN structural genomics initiative (RSGI)"/>
        </authorList>
    </citation>
    <scope>X-RAY CRYSTALLOGRAPHY (2.1 ANGSTROMS)</scope>
    <scope>SUBUNIT</scope>
</reference>
<comment type="function">
    <text evidence="1">Catalyzes the transfer of the phosphoribosyl group of 5-phosphorylribose-1-pyrophosphate (PRPP) to anthranilate to yield N-(5'-phosphoribosyl)-anthranilate (PRA).</text>
</comment>
<comment type="catalytic activity">
    <reaction evidence="1">
        <text>N-(5-phospho-beta-D-ribosyl)anthranilate + diphosphate = 5-phospho-alpha-D-ribose 1-diphosphate + anthranilate</text>
        <dbReference type="Rhea" id="RHEA:11768"/>
        <dbReference type="ChEBI" id="CHEBI:16567"/>
        <dbReference type="ChEBI" id="CHEBI:18277"/>
        <dbReference type="ChEBI" id="CHEBI:33019"/>
        <dbReference type="ChEBI" id="CHEBI:58017"/>
        <dbReference type="EC" id="2.4.2.18"/>
    </reaction>
</comment>
<comment type="cofactor">
    <cofactor evidence="1">
        <name>Mg(2+)</name>
        <dbReference type="ChEBI" id="CHEBI:18420"/>
    </cofactor>
    <text evidence="1">Binds 2 magnesium ions per monomer.</text>
</comment>
<comment type="pathway">
    <text evidence="1">Amino-acid biosynthesis; L-tryptophan biosynthesis; L-tryptophan from chorismate: step 2/5.</text>
</comment>
<comment type="subunit">
    <text evidence="1 2">Homodimer.</text>
</comment>
<comment type="similarity">
    <text evidence="1">Belongs to the anthranilate phosphoribosyltransferase family.</text>
</comment>
<dbReference type="EC" id="2.4.2.18" evidence="1"/>
<dbReference type="RefSeq" id="WP_011173866.1">
    <property type="nucleotide sequence ID" value="NZ_DFSU01000046.1"/>
</dbReference>
<dbReference type="PDB" id="1V8G">
    <property type="method" value="X-ray"/>
    <property type="resolution" value="2.10 A"/>
    <property type="chains" value="A/B=1-329"/>
</dbReference>
<dbReference type="PDBsum" id="1V8G"/>
<dbReference type="SMR" id="P83827"/>
<dbReference type="GeneID" id="3169363"/>
<dbReference type="OMA" id="GPMTNPA"/>
<dbReference type="UniPathway" id="UPA00035">
    <property type="reaction ID" value="UER00041"/>
</dbReference>
<dbReference type="EvolutionaryTrace" id="P83827"/>
<dbReference type="GO" id="GO:0005829">
    <property type="term" value="C:cytosol"/>
    <property type="evidence" value="ECO:0007669"/>
    <property type="project" value="TreeGrafter"/>
</dbReference>
<dbReference type="GO" id="GO:0004048">
    <property type="term" value="F:anthranilate phosphoribosyltransferase activity"/>
    <property type="evidence" value="ECO:0007669"/>
    <property type="project" value="UniProtKB-UniRule"/>
</dbReference>
<dbReference type="GO" id="GO:0000287">
    <property type="term" value="F:magnesium ion binding"/>
    <property type="evidence" value="ECO:0007669"/>
    <property type="project" value="UniProtKB-UniRule"/>
</dbReference>
<dbReference type="GO" id="GO:0000162">
    <property type="term" value="P:L-tryptophan biosynthetic process"/>
    <property type="evidence" value="ECO:0007669"/>
    <property type="project" value="UniProtKB-UniRule"/>
</dbReference>
<dbReference type="FunFam" id="3.40.1030.10:FF:000002">
    <property type="entry name" value="Anthranilate phosphoribosyltransferase"/>
    <property type="match status" value="1"/>
</dbReference>
<dbReference type="Gene3D" id="3.40.1030.10">
    <property type="entry name" value="Nucleoside phosphorylase/phosphoribosyltransferase catalytic domain"/>
    <property type="match status" value="1"/>
</dbReference>
<dbReference type="Gene3D" id="1.20.970.10">
    <property type="entry name" value="Transferase, Pyrimidine Nucleoside Phosphorylase, Chain C"/>
    <property type="match status" value="1"/>
</dbReference>
<dbReference type="HAMAP" id="MF_00211">
    <property type="entry name" value="TrpD"/>
    <property type="match status" value="1"/>
</dbReference>
<dbReference type="InterPro" id="IPR005940">
    <property type="entry name" value="Anthranilate_Pribosyl_Tfrase"/>
</dbReference>
<dbReference type="InterPro" id="IPR000312">
    <property type="entry name" value="Glycosyl_Trfase_fam3"/>
</dbReference>
<dbReference type="InterPro" id="IPR017459">
    <property type="entry name" value="Glycosyl_Trfase_fam3_N_dom"/>
</dbReference>
<dbReference type="InterPro" id="IPR036320">
    <property type="entry name" value="Glycosyl_Trfase_fam3_N_dom_sf"/>
</dbReference>
<dbReference type="InterPro" id="IPR035902">
    <property type="entry name" value="Nuc_phospho_transferase"/>
</dbReference>
<dbReference type="NCBIfam" id="TIGR01245">
    <property type="entry name" value="trpD"/>
    <property type="match status" value="1"/>
</dbReference>
<dbReference type="PANTHER" id="PTHR43285">
    <property type="entry name" value="ANTHRANILATE PHOSPHORIBOSYLTRANSFERASE"/>
    <property type="match status" value="1"/>
</dbReference>
<dbReference type="PANTHER" id="PTHR43285:SF2">
    <property type="entry name" value="ANTHRANILATE PHOSPHORIBOSYLTRANSFERASE"/>
    <property type="match status" value="1"/>
</dbReference>
<dbReference type="Pfam" id="PF02885">
    <property type="entry name" value="Glycos_trans_3N"/>
    <property type="match status" value="1"/>
</dbReference>
<dbReference type="Pfam" id="PF00591">
    <property type="entry name" value="Glycos_transf_3"/>
    <property type="match status" value="1"/>
</dbReference>
<dbReference type="SUPFAM" id="SSF52418">
    <property type="entry name" value="Nucleoside phosphorylase/phosphoribosyltransferase catalytic domain"/>
    <property type="match status" value="1"/>
</dbReference>
<dbReference type="SUPFAM" id="SSF47648">
    <property type="entry name" value="Nucleoside phosphorylase/phosphoribosyltransferase N-terminal domain"/>
    <property type="match status" value="1"/>
</dbReference>
<organism>
    <name type="scientific">Thermus thermophilus</name>
    <dbReference type="NCBI Taxonomy" id="274"/>
    <lineage>
        <taxon>Bacteria</taxon>
        <taxon>Thermotogati</taxon>
        <taxon>Deinococcota</taxon>
        <taxon>Deinococci</taxon>
        <taxon>Thermales</taxon>
        <taxon>Thermaceae</taxon>
        <taxon>Thermus</taxon>
    </lineage>
</organism>